<proteinExistence type="evidence at transcript level"/>
<evidence type="ECO:0000250" key="1"/>
<evidence type="ECO:0000250" key="2">
    <source>
        <dbReference type="UniProtKB" id="P02715"/>
    </source>
</evidence>
<evidence type="ECO:0000250" key="3">
    <source>
        <dbReference type="UniProtKB" id="Q04844"/>
    </source>
</evidence>
<evidence type="ECO:0000255" key="4"/>
<evidence type="ECO:0000305" key="5"/>
<name>ACHE_RAT</name>
<gene>
    <name type="primary">Chrne</name>
    <name type="synonym">Achre</name>
</gene>
<feature type="signal peptide" evidence="1">
    <location>
        <begin position="1"/>
        <end position="20"/>
    </location>
</feature>
<feature type="chain" id="PRO_0000000331" description="Acetylcholine receptor subunit epsilon">
    <location>
        <begin position="21"/>
        <end position="494"/>
    </location>
</feature>
<feature type="topological domain" description="Extracellular" evidence="4">
    <location>
        <begin position="21"/>
        <end position="239"/>
    </location>
</feature>
<feature type="transmembrane region" description="Helical" evidence="4">
    <location>
        <begin position="240"/>
        <end position="264"/>
    </location>
</feature>
<feature type="topological domain" description="Cytoplasmic" evidence="4">
    <location>
        <begin position="265"/>
        <end position="272"/>
    </location>
</feature>
<feature type="transmembrane region" description="Helical" evidence="4">
    <location>
        <begin position="273"/>
        <end position="291"/>
    </location>
</feature>
<feature type="topological domain" description="Extracellular" evidence="4">
    <location>
        <begin position="292"/>
        <end position="306"/>
    </location>
</feature>
<feature type="transmembrane region" description="Helical" evidence="4">
    <location>
        <begin position="307"/>
        <end position="328"/>
    </location>
</feature>
<feature type="topological domain" description="Cytoplasmic" evidence="4">
    <location>
        <begin position="329"/>
        <end position="457"/>
    </location>
</feature>
<feature type="transmembrane region" description="Helical" evidence="4">
    <location>
        <begin position="458"/>
        <end position="481"/>
    </location>
</feature>
<feature type="topological domain" description="Extracellular" evidence="4">
    <location>
        <begin position="482"/>
        <end position="494"/>
    </location>
</feature>
<feature type="glycosylation site" description="N-linked (GlcNAc...) asparagine" evidence="4">
    <location>
        <position position="86"/>
    </location>
</feature>
<feature type="glycosylation site" description="N-linked (GlcNAc...) asparagine" evidence="4">
    <location>
        <position position="161"/>
    </location>
</feature>
<feature type="disulfide bond" evidence="1">
    <location>
        <begin position="148"/>
        <end position="162"/>
    </location>
</feature>
<feature type="sequence conflict" description="In Ref. 2; CAA31628." evidence="5" ref="2">
    <original>SE</original>
    <variation>R</variation>
    <location>
        <begin position="391"/>
        <end position="392"/>
    </location>
</feature>
<comment type="function">
    <text>After binding acetylcholine, the AChR responds by an extensive change in conformation that affects all subunits and leads to opening of an ion-conducting channel across the plasma membrane.</text>
</comment>
<comment type="catalytic activity">
    <reaction evidence="2">
        <text>K(+)(in) = K(+)(out)</text>
        <dbReference type="Rhea" id="RHEA:29463"/>
        <dbReference type="ChEBI" id="CHEBI:29103"/>
    </reaction>
</comment>
<comment type="catalytic activity">
    <reaction evidence="2">
        <text>Na(+)(in) = Na(+)(out)</text>
        <dbReference type="Rhea" id="RHEA:34963"/>
        <dbReference type="ChEBI" id="CHEBI:29101"/>
    </reaction>
</comment>
<comment type="subunit">
    <text evidence="3">Pentamer of two alpha chains, and one each of the beta, delta, and gamma (in immature muscle) or epsilon (in mature muscle) chains. The muscle heteropentamer composed of alpha-1, beta-1, delta, epsilon subunits interacts with the alpha-conotoxin ImII (By similarity).</text>
</comment>
<comment type="subcellular location">
    <subcellularLocation>
        <location>Postsynaptic cell membrane</location>
        <topology>Multi-pass membrane protein</topology>
    </subcellularLocation>
    <subcellularLocation>
        <location>Cell membrane</location>
        <topology>Multi-pass membrane protein</topology>
    </subcellularLocation>
</comment>
<comment type="similarity">
    <text evidence="5">Belongs to the ligand-gated ion channel (TC 1.A.9) family. Acetylcholine receptor (TC 1.A.9.1) subfamily. Epsilon/CHRNE sub-subfamily.</text>
</comment>
<reference key="1">
    <citation type="journal article" date="1990" name="Eur. J. Biochem.">
        <title>Primary structure and functional expression of the alpha-, beta-, gamma-, delta- and epsilon-subunits of the acetylcholine receptor from rat muscle.</title>
        <authorList>
            <person name="Witzemann V."/>
            <person name="Stein E."/>
            <person name="Barg B."/>
            <person name="Konno T."/>
            <person name="Koenen M."/>
            <person name="Kues W."/>
            <person name="Criado M."/>
            <person name="Hofmann M."/>
            <person name="Sakmann B."/>
        </authorList>
    </citation>
    <scope>NUCLEOTIDE SEQUENCE</scope>
    <source>
        <tissue>Muscle</tissue>
    </source>
</reference>
<reference key="2">
    <citation type="journal article" date="1988" name="Nucleic Acids Res.">
        <title>Nucleotide sequence of the rat muscle acetylcholine receptor epsilon-subunit.</title>
        <authorList>
            <person name="Criado M."/>
            <person name="Witzemann V."/>
            <person name="Koenen M."/>
            <person name="Sakmann B."/>
        </authorList>
    </citation>
    <scope>NUCLEOTIDE SEQUENCE [MRNA]</scope>
    <source>
        <strain>Sprague-Dawley</strain>
    </source>
</reference>
<reference key="3">
    <citation type="journal article" date="1994" name="J. Biol. Chem.">
        <title>Calcium-dependent regulation of rat and chick muscle nicotinic acetylcholine receptor (nAChR) gene expression.</title>
        <authorList>
            <person name="Walke W."/>
            <person name="Staple J."/>
            <person name="Adams L."/>
            <person name="Gnegy M."/>
            <person name="Chahine K."/>
            <person name="Goldman D."/>
        </authorList>
    </citation>
    <scope>NUCLEOTIDE SEQUENCE [GENOMIC DNA] OF 1-23</scope>
    <source>
        <strain>Fischer</strain>
        <tissue>Liver</tissue>
    </source>
</reference>
<reference key="4">
    <citation type="journal article" date="1987" name="FEBS Lett.">
        <title>Differential regulation of muscle acetylcholine receptor gamma- and epsilon-subunit mRNAs.</title>
        <authorList>
            <person name="Witzemann V."/>
            <person name="Barg B."/>
            <person name="Nishikawa Y."/>
            <person name="Sakmann B."/>
            <person name="Numa S."/>
        </authorList>
    </citation>
    <scope>NUCLEOTIDE SEQUENCE [GENOMIC DNA] OF 202-305</scope>
    <source>
        <strain>Sprague-Dawley</strain>
    </source>
</reference>
<protein>
    <recommendedName>
        <fullName>Acetylcholine receptor subunit epsilon</fullName>
    </recommendedName>
</protein>
<accession>P09660</accession>
<accession>Q6LAD4</accession>
<organism>
    <name type="scientific">Rattus norvegicus</name>
    <name type="common">Rat</name>
    <dbReference type="NCBI Taxonomy" id="10116"/>
    <lineage>
        <taxon>Eukaryota</taxon>
        <taxon>Metazoa</taxon>
        <taxon>Chordata</taxon>
        <taxon>Craniata</taxon>
        <taxon>Vertebrata</taxon>
        <taxon>Euteleostomi</taxon>
        <taxon>Mammalia</taxon>
        <taxon>Eutheria</taxon>
        <taxon>Euarchontoglires</taxon>
        <taxon>Glires</taxon>
        <taxon>Rodentia</taxon>
        <taxon>Myomorpha</taxon>
        <taxon>Muroidea</taxon>
        <taxon>Muridae</taxon>
        <taxon>Murinae</taxon>
        <taxon>Rattus</taxon>
    </lineage>
</organism>
<dbReference type="EMBL" id="X74836">
    <property type="protein sequence ID" value="CAA52830.1"/>
    <property type="molecule type" value="mRNA"/>
</dbReference>
<dbReference type="EMBL" id="X13252">
    <property type="protein sequence ID" value="CAA31628.1"/>
    <property type="molecule type" value="mRNA"/>
</dbReference>
<dbReference type="EMBL" id="Z23062">
    <property type="protein sequence ID" value="CAA80597.1"/>
    <property type="molecule type" value="Genomic_DNA"/>
</dbReference>
<dbReference type="EMBL" id="X06365">
    <property type="protein sequence ID" value="CAA29663.1"/>
    <property type="molecule type" value="Genomic_DNA"/>
</dbReference>
<dbReference type="PIR" id="S01959">
    <property type="entry name" value="ACRTE"/>
</dbReference>
<dbReference type="RefSeq" id="NP_058890.1">
    <property type="nucleotide sequence ID" value="NM_017194.1"/>
</dbReference>
<dbReference type="SMR" id="P09660"/>
<dbReference type="ComplexPortal" id="CPX-258">
    <property type="entry name" value="Muscle-type nicotinic acetylcholine receptor complex, alpha1-beta1-delta-epsilon"/>
</dbReference>
<dbReference type="FunCoup" id="P09660">
    <property type="interactions" value="29"/>
</dbReference>
<dbReference type="STRING" id="10116.ENSRNOP00000005050"/>
<dbReference type="BindingDB" id="P09660"/>
<dbReference type="ChEMBL" id="CHEMBL4961"/>
<dbReference type="DrugCentral" id="P09660"/>
<dbReference type="GlyCosmos" id="P09660">
    <property type="glycosylation" value="2 sites, No reported glycans"/>
</dbReference>
<dbReference type="GlyGen" id="P09660">
    <property type="glycosylation" value="2 sites"/>
</dbReference>
<dbReference type="PhosphoSitePlus" id="P09660"/>
<dbReference type="jPOST" id="P09660"/>
<dbReference type="PaxDb" id="10116-ENSRNOP00000005050"/>
<dbReference type="GeneID" id="29422"/>
<dbReference type="KEGG" id="rno:29422"/>
<dbReference type="UCSC" id="RGD:2353">
    <property type="organism name" value="rat"/>
</dbReference>
<dbReference type="AGR" id="RGD:2353"/>
<dbReference type="CTD" id="1145"/>
<dbReference type="RGD" id="2353">
    <property type="gene designation" value="Chrne"/>
</dbReference>
<dbReference type="eggNOG" id="KOG3645">
    <property type="taxonomic scope" value="Eukaryota"/>
</dbReference>
<dbReference type="InParanoid" id="P09660"/>
<dbReference type="OrthoDB" id="5975154at2759"/>
<dbReference type="PhylomeDB" id="P09660"/>
<dbReference type="Reactome" id="R-RNO-629587">
    <property type="pathway name" value="Highly sodium permeable postsynaptic acetylcholine nicotinic receptors"/>
</dbReference>
<dbReference type="PRO" id="PR:P09660"/>
<dbReference type="Proteomes" id="UP000002494">
    <property type="component" value="Unplaced"/>
</dbReference>
<dbReference type="GO" id="GO:0005892">
    <property type="term" value="C:acetylcholine-gated channel complex"/>
    <property type="evidence" value="ECO:0000314"/>
    <property type="project" value="RGD"/>
</dbReference>
<dbReference type="GO" id="GO:0031594">
    <property type="term" value="C:neuromuscular junction"/>
    <property type="evidence" value="ECO:0000266"/>
    <property type="project" value="RGD"/>
</dbReference>
<dbReference type="GO" id="GO:0043005">
    <property type="term" value="C:neuron projection"/>
    <property type="evidence" value="ECO:0000318"/>
    <property type="project" value="GO_Central"/>
</dbReference>
<dbReference type="GO" id="GO:0005886">
    <property type="term" value="C:plasma membrane"/>
    <property type="evidence" value="ECO:0000318"/>
    <property type="project" value="GO_Central"/>
</dbReference>
<dbReference type="GO" id="GO:0045211">
    <property type="term" value="C:postsynaptic membrane"/>
    <property type="evidence" value="ECO:0000266"/>
    <property type="project" value="RGD"/>
</dbReference>
<dbReference type="GO" id="GO:0099634">
    <property type="term" value="C:postsynaptic specialization membrane"/>
    <property type="evidence" value="ECO:0000266"/>
    <property type="project" value="RGD"/>
</dbReference>
<dbReference type="GO" id="GO:0045202">
    <property type="term" value="C:synapse"/>
    <property type="evidence" value="ECO:0000318"/>
    <property type="project" value="GO_Central"/>
</dbReference>
<dbReference type="GO" id="GO:0015464">
    <property type="term" value="F:acetylcholine receptor activity"/>
    <property type="evidence" value="ECO:0000318"/>
    <property type="project" value="GO_Central"/>
</dbReference>
<dbReference type="GO" id="GO:0022848">
    <property type="term" value="F:acetylcholine-gated monoatomic cation-selective channel activity"/>
    <property type="evidence" value="ECO:0000314"/>
    <property type="project" value="RGD"/>
</dbReference>
<dbReference type="GO" id="GO:1904315">
    <property type="term" value="F:transmitter-gated monoatomic ion channel activity involved in regulation of postsynaptic membrane potential"/>
    <property type="evidence" value="ECO:0000266"/>
    <property type="project" value="RGD"/>
</dbReference>
<dbReference type="GO" id="GO:0095500">
    <property type="term" value="P:acetylcholine receptor signaling pathway"/>
    <property type="evidence" value="ECO:0000318"/>
    <property type="project" value="GO_Central"/>
</dbReference>
<dbReference type="GO" id="GO:0007268">
    <property type="term" value="P:chemical synaptic transmission"/>
    <property type="evidence" value="ECO:0000318"/>
    <property type="project" value="GO_Central"/>
</dbReference>
<dbReference type="GO" id="GO:0051899">
    <property type="term" value="P:membrane depolarization"/>
    <property type="evidence" value="ECO:0000318"/>
    <property type="project" value="GO_Central"/>
</dbReference>
<dbReference type="GO" id="GO:0006812">
    <property type="term" value="P:monoatomic cation transport"/>
    <property type="evidence" value="ECO:0000314"/>
    <property type="project" value="RGD"/>
</dbReference>
<dbReference type="GO" id="GO:0034220">
    <property type="term" value="P:monoatomic ion transmembrane transport"/>
    <property type="evidence" value="ECO:0000318"/>
    <property type="project" value="GO_Central"/>
</dbReference>
<dbReference type="GO" id="GO:0042391">
    <property type="term" value="P:regulation of membrane potential"/>
    <property type="evidence" value="ECO:0000266"/>
    <property type="project" value="RGD"/>
</dbReference>
<dbReference type="GO" id="GO:0003009">
    <property type="term" value="P:skeletal muscle contraction"/>
    <property type="evidence" value="ECO:0000314"/>
    <property type="project" value="RGD"/>
</dbReference>
<dbReference type="CDD" id="cd19064">
    <property type="entry name" value="LGIC_TM_nAChR"/>
    <property type="match status" value="1"/>
</dbReference>
<dbReference type="FunFam" id="1.20.58.390:FF:000048">
    <property type="entry name" value="Cholinergic receptor nicotinic epsilon subunit"/>
    <property type="match status" value="1"/>
</dbReference>
<dbReference type="FunFam" id="1.20.58.390:FF:000010">
    <property type="entry name" value="Nicotinic acetylcholine receptor subunit epsilon"/>
    <property type="match status" value="1"/>
</dbReference>
<dbReference type="FunFam" id="2.70.170.10:FF:000012">
    <property type="entry name" value="Nicotinic acetylcholine receptor subunit gamma"/>
    <property type="match status" value="1"/>
</dbReference>
<dbReference type="Gene3D" id="2.70.170.10">
    <property type="entry name" value="Neurotransmitter-gated ion-channel ligand-binding domain"/>
    <property type="match status" value="1"/>
</dbReference>
<dbReference type="Gene3D" id="1.20.58.390">
    <property type="entry name" value="Neurotransmitter-gated ion-channel transmembrane domain"/>
    <property type="match status" value="2"/>
</dbReference>
<dbReference type="InterPro" id="IPR006202">
    <property type="entry name" value="Neur_chan_lig-bd"/>
</dbReference>
<dbReference type="InterPro" id="IPR036734">
    <property type="entry name" value="Neur_chan_lig-bd_sf"/>
</dbReference>
<dbReference type="InterPro" id="IPR006201">
    <property type="entry name" value="Neur_channel"/>
</dbReference>
<dbReference type="InterPro" id="IPR036719">
    <property type="entry name" value="Neuro-gated_channel_TM_sf"/>
</dbReference>
<dbReference type="InterPro" id="IPR038050">
    <property type="entry name" value="Neuro_actylchol_rec"/>
</dbReference>
<dbReference type="InterPro" id="IPR006029">
    <property type="entry name" value="Neurotrans-gated_channel_TM"/>
</dbReference>
<dbReference type="InterPro" id="IPR018000">
    <property type="entry name" value="Neurotransmitter_ion_chnl_CS"/>
</dbReference>
<dbReference type="InterPro" id="IPR002394">
    <property type="entry name" value="Nicotinic_acetylcholine_rcpt"/>
</dbReference>
<dbReference type="PANTHER" id="PTHR18945">
    <property type="entry name" value="NEUROTRANSMITTER GATED ION CHANNEL"/>
    <property type="match status" value="1"/>
</dbReference>
<dbReference type="Pfam" id="PF02931">
    <property type="entry name" value="Neur_chan_LBD"/>
    <property type="match status" value="1"/>
</dbReference>
<dbReference type="Pfam" id="PF02932">
    <property type="entry name" value="Neur_chan_memb"/>
    <property type="match status" value="1"/>
</dbReference>
<dbReference type="PRINTS" id="PR00254">
    <property type="entry name" value="NICOTINICR"/>
</dbReference>
<dbReference type="PRINTS" id="PR00252">
    <property type="entry name" value="NRIONCHANNEL"/>
</dbReference>
<dbReference type="SUPFAM" id="SSF90112">
    <property type="entry name" value="Neurotransmitter-gated ion-channel transmembrane pore"/>
    <property type="match status" value="1"/>
</dbReference>
<dbReference type="SUPFAM" id="SSF63712">
    <property type="entry name" value="Nicotinic receptor ligand binding domain-like"/>
    <property type="match status" value="1"/>
</dbReference>
<dbReference type="PROSITE" id="PS00236">
    <property type="entry name" value="NEUROTR_ION_CHANNEL"/>
    <property type="match status" value="1"/>
</dbReference>
<keyword id="KW-1003">Cell membrane</keyword>
<keyword id="KW-1015">Disulfide bond</keyword>
<keyword id="KW-0325">Glycoprotein</keyword>
<keyword id="KW-0407">Ion channel</keyword>
<keyword id="KW-0406">Ion transport</keyword>
<keyword id="KW-1071">Ligand-gated ion channel</keyword>
<keyword id="KW-0472">Membrane</keyword>
<keyword id="KW-0628">Postsynaptic cell membrane</keyword>
<keyword id="KW-0675">Receptor</keyword>
<keyword id="KW-1185">Reference proteome</keyword>
<keyword id="KW-0732">Signal</keyword>
<keyword id="KW-0770">Synapse</keyword>
<keyword id="KW-0812">Transmembrane</keyword>
<keyword id="KW-1133">Transmembrane helix</keyword>
<keyword id="KW-0813">Transport</keyword>
<sequence length="494" mass="54948">MTMALLGTLLLLALFGRSQGKNEELSLYHHLFDNYDPECRPVRRPEDTVTITLKVTLTNLISLNEKEETLTTSVWIGIEWQDYRLNFSKDDFAGVEILRVPSEHVWLPEIVLENNIDGQFGVAYDCNVLVYEGGSVSWLPPAIYRSTCAVEVTYFPFDWQNCSLIFRSQTYNAEEVELIFAVDDDGNAINKIDIDTAAFTENGEWAIDYCPGMIRHYEGGSTEDPGETDVIYTLIIRRKPLFYVINIIVPCVLISGLVLLAYFLPAQAGGQKCTVSINVLLAQTVFLFLIAQKIPETSLSVPLLGRYLIFVMVVATLIVMNCVIVLNVSLRTPTTHATSPRLRQILLELLPRLLGLSPPPEDPGAASPARRASSVGILLRAEELILKKPRSELVFEGQRHRHGTWTAAALCQNLGAAAPEVRCCVDAVNFVAESTRDQEATGEELSDWVRMGKALDNVCFWAALVLFSVGSTLIFLGGYFNQVPDLPYPPCIQP</sequence>